<name>NPC2_NEUCR</name>
<feature type="signal peptide" evidence="2">
    <location>
        <begin position="1"/>
        <end position="17"/>
    </location>
</feature>
<feature type="propeptide" id="PRO_0000019889" evidence="1">
    <location>
        <begin position="18"/>
        <end position="30"/>
    </location>
</feature>
<feature type="chain" id="PRO_0000019890" description="Phosphatidylglycerol/phosphatidylinositol transfer protein">
    <location>
        <begin position="31"/>
        <end position="177"/>
    </location>
</feature>
<evidence type="ECO:0000250" key="1"/>
<evidence type="ECO:0000255" key="2"/>
<evidence type="ECO:0000305" key="3"/>
<accession>Q7RZ85</accession>
<dbReference type="EMBL" id="BX908809">
    <property type="protein sequence ID" value="CAF06060.1"/>
    <property type="molecule type" value="Genomic_DNA"/>
</dbReference>
<dbReference type="EMBL" id="CM002239">
    <property type="protein sequence ID" value="EAA28229.1"/>
    <property type="molecule type" value="Genomic_DNA"/>
</dbReference>
<dbReference type="RefSeq" id="XP_957465.1">
    <property type="nucleotide sequence ID" value="XM_952372.3"/>
</dbReference>
<dbReference type="SMR" id="Q7RZ85"/>
<dbReference type="FunCoup" id="Q7RZ85">
    <property type="interactions" value="99"/>
</dbReference>
<dbReference type="STRING" id="367110.Q7RZ85"/>
<dbReference type="PaxDb" id="5141-EFNCRP00000005222"/>
<dbReference type="EnsemblFungi" id="EAA28229">
    <property type="protein sequence ID" value="EAA28229"/>
    <property type="gene ID" value="NCU04388"/>
</dbReference>
<dbReference type="GeneID" id="3873619"/>
<dbReference type="KEGG" id="ncr:NCU04388"/>
<dbReference type="VEuPathDB" id="FungiDB:NCU04388"/>
<dbReference type="HOGENOM" id="CLU_097982_0_0_1"/>
<dbReference type="InParanoid" id="Q7RZ85"/>
<dbReference type="OMA" id="HQTYDLC"/>
<dbReference type="OrthoDB" id="6409159at2759"/>
<dbReference type="Proteomes" id="UP000001805">
    <property type="component" value="Chromosome 4, Linkage Group IV"/>
</dbReference>
<dbReference type="GO" id="GO:0000328">
    <property type="term" value="C:fungal-type vacuole lumen"/>
    <property type="evidence" value="ECO:0007669"/>
    <property type="project" value="EnsemblFungi"/>
</dbReference>
<dbReference type="GO" id="GO:0031210">
    <property type="term" value="F:phosphatidylcholine binding"/>
    <property type="evidence" value="ECO:0007669"/>
    <property type="project" value="EnsemblFungi"/>
</dbReference>
<dbReference type="GO" id="GO:0035091">
    <property type="term" value="F:phosphatidylinositol binding"/>
    <property type="evidence" value="ECO:0007669"/>
    <property type="project" value="EnsemblFungi"/>
</dbReference>
<dbReference type="GO" id="GO:0001786">
    <property type="term" value="F:phosphatidylserine binding"/>
    <property type="evidence" value="ECO:0007669"/>
    <property type="project" value="EnsemblFungi"/>
</dbReference>
<dbReference type="GO" id="GO:0032934">
    <property type="term" value="F:sterol binding"/>
    <property type="evidence" value="ECO:0000318"/>
    <property type="project" value="GO_Central"/>
</dbReference>
<dbReference type="GO" id="GO:0032366">
    <property type="term" value="P:intracellular sterol transport"/>
    <property type="evidence" value="ECO:0007669"/>
    <property type="project" value="EnsemblFungi"/>
</dbReference>
<dbReference type="GO" id="GO:0015918">
    <property type="term" value="P:sterol transport"/>
    <property type="evidence" value="ECO:0000318"/>
    <property type="project" value="GO_Central"/>
</dbReference>
<dbReference type="CDD" id="cd00917">
    <property type="entry name" value="PG-PI_TP"/>
    <property type="match status" value="1"/>
</dbReference>
<dbReference type="FunFam" id="2.60.40.770:FF:000004">
    <property type="entry name" value="Phosphatidylglycerol/phosphatidylinositol transfer protein"/>
    <property type="match status" value="1"/>
</dbReference>
<dbReference type="Gene3D" id="2.60.40.770">
    <property type="match status" value="1"/>
</dbReference>
<dbReference type="InterPro" id="IPR014756">
    <property type="entry name" value="Ig_E-set"/>
</dbReference>
<dbReference type="InterPro" id="IPR003172">
    <property type="entry name" value="ML_dom"/>
</dbReference>
<dbReference type="InterPro" id="IPR033917">
    <property type="entry name" value="ML_PG-PI_TP"/>
</dbReference>
<dbReference type="InterPro" id="IPR039670">
    <property type="entry name" value="NPC2-like"/>
</dbReference>
<dbReference type="PANTHER" id="PTHR11306">
    <property type="entry name" value="NIEMANN PICK TYPE C2 PROTEIN NPC2-RELATED"/>
    <property type="match status" value="1"/>
</dbReference>
<dbReference type="PANTHER" id="PTHR11306:SF0">
    <property type="entry name" value="PHOSPHATIDYLGLYCEROL_PHOSPHATIDYLINOSITOL TRANSFER PROTEIN"/>
    <property type="match status" value="1"/>
</dbReference>
<dbReference type="Pfam" id="PF02221">
    <property type="entry name" value="E1_DerP2_DerF2"/>
    <property type="match status" value="1"/>
</dbReference>
<dbReference type="SMART" id="SM00737">
    <property type="entry name" value="ML"/>
    <property type="match status" value="1"/>
</dbReference>
<dbReference type="SUPFAM" id="SSF81296">
    <property type="entry name" value="E set domains"/>
    <property type="match status" value="1"/>
</dbReference>
<organism>
    <name type="scientific">Neurospora crassa (strain ATCC 24698 / 74-OR23-1A / CBS 708.71 / DSM 1257 / FGSC 987)</name>
    <dbReference type="NCBI Taxonomy" id="367110"/>
    <lineage>
        <taxon>Eukaryota</taxon>
        <taxon>Fungi</taxon>
        <taxon>Dikarya</taxon>
        <taxon>Ascomycota</taxon>
        <taxon>Pezizomycotina</taxon>
        <taxon>Sordariomycetes</taxon>
        <taxon>Sordariomycetidae</taxon>
        <taxon>Sordariales</taxon>
        <taxon>Sordariaceae</taxon>
        <taxon>Neurospora</taxon>
    </lineage>
</organism>
<sequence>MRLSAAVIALLSTSAAAFSVYRENSVSANDELDVPGKSPLRFCDAAADRKDDIVTIEEVILTPNPPEAGQTLTIEASGIVKEAIEEGAYVNLQVKYGYIRLINTSADLCKEMKNVELECPIKKGRLSITKNVELPKEIPPGKYTVEADVYNSDDKHITCLTATVFFGRKTLGFLDDL</sequence>
<gene>
    <name type="primary">npc-2</name>
    <name type="ORF">29E8.270</name>
    <name type="ORF">NCU04388</name>
</gene>
<comment type="function">
    <text evidence="1">Catalyzes the intermembrane transfer of phosphatidylglycerol and phosphatidylinositol.</text>
</comment>
<comment type="subunit">
    <text evidence="1">Monomer.</text>
</comment>
<comment type="similarity">
    <text evidence="3">Belongs to the NPC2 family.</text>
</comment>
<protein>
    <recommendedName>
        <fullName>Phosphatidylglycerol/phosphatidylinositol transfer protein</fullName>
        <shortName>PG/PI-TP</shortName>
    </recommendedName>
</protein>
<proteinExistence type="inferred from homology"/>
<reference key="1">
    <citation type="journal article" date="2003" name="Nucleic Acids Res.">
        <title>What's in the genome of a filamentous fungus? Analysis of the Neurospora genome sequence.</title>
        <authorList>
            <person name="Mannhaupt G."/>
            <person name="Montrone C."/>
            <person name="Haase D."/>
            <person name="Mewes H.-W."/>
            <person name="Aign V."/>
            <person name="Hoheisel J.D."/>
            <person name="Fartmann B."/>
            <person name="Nyakatura G."/>
            <person name="Kempken F."/>
            <person name="Maier J."/>
            <person name="Schulte U."/>
        </authorList>
    </citation>
    <scope>NUCLEOTIDE SEQUENCE [LARGE SCALE GENOMIC DNA]</scope>
    <source>
        <strain>ATCC 24698 / 74-OR23-1A / CBS 708.71 / DSM 1257 / FGSC 987</strain>
    </source>
</reference>
<reference key="2">
    <citation type="journal article" date="2003" name="Nature">
        <title>The genome sequence of the filamentous fungus Neurospora crassa.</title>
        <authorList>
            <person name="Galagan J.E."/>
            <person name="Calvo S.E."/>
            <person name="Borkovich K.A."/>
            <person name="Selker E.U."/>
            <person name="Read N.D."/>
            <person name="Jaffe D.B."/>
            <person name="FitzHugh W."/>
            <person name="Ma L.-J."/>
            <person name="Smirnov S."/>
            <person name="Purcell S."/>
            <person name="Rehman B."/>
            <person name="Elkins T."/>
            <person name="Engels R."/>
            <person name="Wang S."/>
            <person name="Nielsen C.B."/>
            <person name="Butler J."/>
            <person name="Endrizzi M."/>
            <person name="Qui D."/>
            <person name="Ianakiev P."/>
            <person name="Bell-Pedersen D."/>
            <person name="Nelson M.A."/>
            <person name="Werner-Washburne M."/>
            <person name="Selitrennikoff C.P."/>
            <person name="Kinsey J.A."/>
            <person name="Braun E.L."/>
            <person name="Zelter A."/>
            <person name="Schulte U."/>
            <person name="Kothe G.O."/>
            <person name="Jedd G."/>
            <person name="Mewes H.-W."/>
            <person name="Staben C."/>
            <person name="Marcotte E."/>
            <person name="Greenberg D."/>
            <person name="Roy A."/>
            <person name="Foley K."/>
            <person name="Naylor J."/>
            <person name="Stange-Thomann N."/>
            <person name="Barrett R."/>
            <person name="Gnerre S."/>
            <person name="Kamal M."/>
            <person name="Kamvysselis M."/>
            <person name="Mauceli E.W."/>
            <person name="Bielke C."/>
            <person name="Rudd S."/>
            <person name="Frishman D."/>
            <person name="Krystofova S."/>
            <person name="Rasmussen C."/>
            <person name="Metzenberg R.L."/>
            <person name="Perkins D.D."/>
            <person name="Kroken S."/>
            <person name="Cogoni C."/>
            <person name="Macino G."/>
            <person name="Catcheside D.E.A."/>
            <person name="Li W."/>
            <person name="Pratt R.J."/>
            <person name="Osmani S.A."/>
            <person name="DeSouza C.P.C."/>
            <person name="Glass N.L."/>
            <person name="Orbach M.J."/>
            <person name="Berglund J.A."/>
            <person name="Voelker R."/>
            <person name="Yarden O."/>
            <person name="Plamann M."/>
            <person name="Seiler S."/>
            <person name="Dunlap J.C."/>
            <person name="Radford A."/>
            <person name="Aramayo R."/>
            <person name="Natvig D.O."/>
            <person name="Alex L.A."/>
            <person name="Mannhaupt G."/>
            <person name="Ebbole D.J."/>
            <person name="Freitag M."/>
            <person name="Paulsen I."/>
            <person name="Sachs M.S."/>
            <person name="Lander E.S."/>
            <person name="Nusbaum C."/>
            <person name="Birren B.W."/>
        </authorList>
    </citation>
    <scope>NUCLEOTIDE SEQUENCE [LARGE SCALE GENOMIC DNA]</scope>
    <source>
        <strain>ATCC 24698 / 74-OR23-1A / CBS 708.71 / DSM 1257 / FGSC 987</strain>
    </source>
</reference>
<keyword id="KW-0445">Lipid transport</keyword>
<keyword id="KW-1185">Reference proteome</keyword>
<keyword id="KW-0732">Signal</keyword>
<keyword id="KW-0813">Transport</keyword>